<comment type="catalytic activity">
    <reaction evidence="1">
        <text>tRNA(Arg) + L-arginine + ATP = L-arginyl-tRNA(Arg) + AMP + diphosphate</text>
        <dbReference type="Rhea" id="RHEA:20301"/>
        <dbReference type="Rhea" id="RHEA-COMP:9658"/>
        <dbReference type="Rhea" id="RHEA-COMP:9673"/>
        <dbReference type="ChEBI" id="CHEBI:30616"/>
        <dbReference type="ChEBI" id="CHEBI:32682"/>
        <dbReference type="ChEBI" id="CHEBI:33019"/>
        <dbReference type="ChEBI" id="CHEBI:78442"/>
        <dbReference type="ChEBI" id="CHEBI:78513"/>
        <dbReference type="ChEBI" id="CHEBI:456215"/>
        <dbReference type="EC" id="6.1.1.19"/>
    </reaction>
</comment>
<comment type="subunit">
    <text evidence="1">Monomer.</text>
</comment>
<comment type="subcellular location">
    <subcellularLocation>
        <location evidence="1">Cytoplasm</location>
    </subcellularLocation>
</comment>
<comment type="similarity">
    <text evidence="1">Belongs to the class-I aminoacyl-tRNA synthetase family.</text>
</comment>
<evidence type="ECO:0000255" key="1">
    <source>
        <dbReference type="HAMAP-Rule" id="MF_00123"/>
    </source>
</evidence>
<gene>
    <name evidence="1" type="primary">argS</name>
    <name type="ordered locus">PPA2128</name>
</gene>
<feature type="chain" id="PRO_0000242067" description="Arginine--tRNA ligase">
    <location>
        <begin position="1"/>
        <end position="556"/>
    </location>
</feature>
<feature type="short sequence motif" description="'HIGH' region">
    <location>
        <begin position="117"/>
        <end position="127"/>
    </location>
</feature>
<accession>Q6A5X8</accession>
<organism>
    <name type="scientific">Cutibacterium acnes (strain DSM 16379 / KPA171202)</name>
    <name type="common">Propionibacterium acnes</name>
    <dbReference type="NCBI Taxonomy" id="267747"/>
    <lineage>
        <taxon>Bacteria</taxon>
        <taxon>Bacillati</taxon>
        <taxon>Actinomycetota</taxon>
        <taxon>Actinomycetes</taxon>
        <taxon>Propionibacteriales</taxon>
        <taxon>Propionibacteriaceae</taxon>
        <taxon>Cutibacterium</taxon>
    </lineage>
</organism>
<keyword id="KW-0030">Aminoacyl-tRNA synthetase</keyword>
<keyword id="KW-0067">ATP-binding</keyword>
<keyword id="KW-0963">Cytoplasm</keyword>
<keyword id="KW-0436">Ligase</keyword>
<keyword id="KW-0547">Nucleotide-binding</keyword>
<keyword id="KW-0648">Protein biosynthesis</keyword>
<reference key="1">
    <citation type="journal article" date="2004" name="Science">
        <title>The complete genome sequence of Propionibacterium acnes, a commensal of human skin.</title>
        <authorList>
            <person name="Brueggemann H."/>
            <person name="Henne A."/>
            <person name="Hoster F."/>
            <person name="Liesegang H."/>
            <person name="Wiezer A."/>
            <person name="Strittmatter A."/>
            <person name="Hujer S."/>
            <person name="Duerre P."/>
            <person name="Gottschalk G."/>
        </authorList>
    </citation>
    <scope>NUCLEOTIDE SEQUENCE [LARGE SCALE GENOMIC DNA]</scope>
    <source>
        <strain>DSM 16379 / KPA171202</strain>
    </source>
</reference>
<sequence length="556" mass="61178">MSSLPSRLAARIESAIGVDPQLRPATKPQFGHFQSNVALRLAKEEKRPPRDVAADIVAKLDIEDLCETPEIAGPGFINLRLRADVLARVASDFVTDPNAGIAQAEKPERVVIDYSAPNVAKQMHVGHLRSTIIGDCFNRVLSAQGHTVIPQNHIGDWGTQFGMLIEYIVEKRMDVEDFDLSGVEQLYQDSKKTFDADPQFADRARRRVVKLQGGDAETLRIWRTLIDISLEGFNATYSRLSVLLTDEDVAGESSYNDDLPRVVDELVADGLAVEDNGALCVFVEGQDAPMIVRKRDGGFGYDATDLAAIRRRVGKLKADRIIYVTDVRQSHHFEVLFQVARMAGFLPDDVEAEHVGYGMVLGPDGRPFKTREGGTVSLSDLLDEAETHAAPNIALAAIKYADLSNGLQKDYVFDAERMVQTTGDTGPYLQYAHARVSQILRKAAAEANPNVDPEADLDAMDWGRISVLDEPAEQQLALLLSRFGEIVEVVATDLTPHKLCTYLYELAGAYSVFYEQCPVLRSTGEVRGSRLALCAATRRVLGRGLDLLGIDAPDRM</sequence>
<name>SYR_CUTAK</name>
<dbReference type="EC" id="6.1.1.19" evidence="1"/>
<dbReference type="EMBL" id="AE017283">
    <property type="protein sequence ID" value="AAT83835.1"/>
    <property type="molecule type" value="Genomic_DNA"/>
</dbReference>
<dbReference type="SMR" id="Q6A5X8"/>
<dbReference type="EnsemblBacteria" id="AAT83835">
    <property type="protein sequence ID" value="AAT83835"/>
    <property type="gene ID" value="PPA2128"/>
</dbReference>
<dbReference type="KEGG" id="pac:PPA2128"/>
<dbReference type="PATRIC" id="fig|267747.3.peg.2182"/>
<dbReference type="eggNOG" id="COG0018">
    <property type="taxonomic scope" value="Bacteria"/>
</dbReference>
<dbReference type="HOGENOM" id="CLU_006406_5_1_11"/>
<dbReference type="Proteomes" id="UP000000603">
    <property type="component" value="Chromosome"/>
</dbReference>
<dbReference type="GO" id="GO:0005737">
    <property type="term" value="C:cytoplasm"/>
    <property type="evidence" value="ECO:0007669"/>
    <property type="project" value="UniProtKB-SubCell"/>
</dbReference>
<dbReference type="GO" id="GO:0004814">
    <property type="term" value="F:arginine-tRNA ligase activity"/>
    <property type="evidence" value="ECO:0007669"/>
    <property type="project" value="UniProtKB-UniRule"/>
</dbReference>
<dbReference type="GO" id="GO:0005524">
    <property type="term" value="F:ATP binding"/>
    <property type="evidence" value="ECO:0007669"/>
    <property type="project" value="UniProtKB-UniRule"/>
</dbReference>
<dbReference type="GO" id="GO:0006420">
    <property type="term" value="P:arginyl-tRNA aminoacylation"/>
    <property type="evidence" value="ECO:0007669"/>
    <property type="project" value="UniProtKB-UniRule"/>
</dbReference>
<dbReference type="CDD" id="cd07956">
    <property type="entry name" value="Anticodon_Ia_Arg"/>
    <property type="match status" value="1"/>
</dbReference>
<dbReference type="CDD" id="cd00671">
    <property type="entry name" value="ArgRS_core"/>
    <property type="match status" value="1"/>
</dbReference>
<dbReference type="FunFam" id="1.10.730.10:FF:000008">
    <property type="entry name" value="Arginine--tRNA ligase"/>
    <property type="match status" value="1"/>
</dbReference>
<dbReference type="FunFam" id="3.40.50.620:FF:000116">
    <property type="entry name" value="Arginine--tRNA ligase"/>
    <property type="match status" value="1"/>
</dbReference>
<dbReference type="Gene3D" id="3.30.1360.70">
    <property type="entry name" value="Arginyl tRNA synthetase N-terminal domain"/>
    <property type="match status" value="1"/>
</dbReference>
<dbReference type="Gene3D" id="3.40.50.620">
    <property type="entry name" value="HUPs"/>
    <property type="match status" value="1"/>
</dbReference>
<dbReference type="Gene3D" id="1.10.730.10">
    <property type="entry name" value="Isoleucyl-tRNA Synthetase, Domain 1"/>
    <property type="match status" value="1"/>
</dbReference>
<dbReference type="HAMAP" id="MF_00123">
    <property type="entry name" value="Arg_tRNA_synth"/>
    <property type="match status" value="1"/>
</dbReference>
<dbReference type="InterPro" id="IPR001412">
    <property type="entry name" value="aa-tRNA-synth_I_CS"/>
</dbReference>
<dbReference type="InterPro" id="IPR001278">
    <property type="entry name" value="Arg-tRNA-ligase"/>
</dbReference>
<dbReference type="InterPro" id="IPR005148">
    <property type="entry name" value="Arg-tRNA-synth_N"/>
</dbReference>
<dbReference type="InterPro" id="IPR036695">
    <property type="entry name" value="Arg-tRNA-synth_N_sf"/>
</dbReference>
<dbReference type="InterPro" id="IPR035684">
    <property type="entry name" value="ArgRS_core"/>
</dbReference>
<dbReference type="InterPro" id="IPR008909">
    <property type="entry name" value="DALR_anticod-bd"/>
</dbReference>
<dbReference type="InterPro" id="IPR014729">
    <property type="entry name" value="Rossmann-like_a/b/a_fold"/>
</dbReference>
<dbReference type="InterPro" id="IPR009080">
    <property type="entry name" value="tRNAsynth_Ia_anticodon-bd"/>
</dbReference>
<dbReference type="NCBIfam" id="TIGR00456">
    <property type="entry name" value="argS"/>
    <property type="match status" value="1"/>
</dbReference>
<dbReference type="PANTHER" id="PTHR11956:SF5">
    <property type="entry name" value="ARGININE--TRNA LIGASE, CYTOPLASMIC"/>
    <property type="match status" value="1"/>
</dbReference>
<dbReference type="PANTHER" id="PTHR11956">
    <property type="entry name" value="ARGINYL-TRNA SYNTHETASE"/>
    <property type="match status" value="1"/>
</dbReference>
<dbReference type="Pfam" id="PF03485">
    <property type="entry name" value="Arg_tRNA_synt_N"/>
    <property type="match status" value="1"/>
</dbReference>
<dbReference type="Pfam" id="PF05746">
    <property type="entry name" value="DALR_1"/>
    <property type="match status" value="1"/>
</dbReference>
<dbReference type="Pfam" id="PF00750">
    <property type="entry name" value="tRNA-synt_1d"/>
    <property type="match status" value="1"/>
</dbReference>
<dbReference type="PRINTS" id="PR01038">
    <property type="entry name" value="TRNASYNTHARG"/>
</dbReference>
<dbReference type="SMART" id="SM01016">
    <property type="entry name" value="Arg_tRNA_synt_N"/>
    <property type="match status" value="1"/>
</dbReference>
<dbReference type="SMART" id="SM00836">
    <property type="entry name" value="DALR_1"/>
    <property type="match status" value="1"/>
</dbReference>
<dbReference type="SUPFAM" id="SSF47323">
    <property type="entry name" value="Anticodon-binding domain of a subclass of class I aminoacyl-tRNA synthetases"/>
    <property type="match status" value="1"/>
</dbReference>
<dbReference type="SUPFAM" id="SSF55190">
    <property type="entry name" value="Arginyl-tRNA synthetase (ArgRS), N-terminal 'additional' domain"/>
    <property type="match status" value="1"/>
</dbReference>
<dbReference type="SUPFAM" id="SSF52374">
    <property type="entry name" value="Nucleotidylyl transferase"/>
    <property type="match status" value="1"/>
</dbReference>
<dbReference type="PROSITE" id="PS00178">
    <property type="entry name" value="AA_TRNA_LIGASE_I"/>
    <property type="match status" value="1"/>
</dbReference>
<protein>
    <recommendedName>
        <fullName evidence="1">Arginine--tRNA ligase</fullName>
        <ecNumber evidence="1">6.1.1.19</ecNumber>
    </recommendedName>
    <alternativeName>
        <fullName evidence="1">Arginyl-tRNA synthetase</fullName>
        <shortName evidence="1">ArgRS</shortName>
    </alternativeName>
</protein>
<proteinExistence type="inferred from homology"/>